<comment type="function">
    <text evidence="1">Located on the platform of the 30S subunit, it bridges several disparate RNA helices of the 16S rRNA. Forms part of the Shine-Dalgarno cleft in the 70S ribosome.</text>
</comment>
<comment type="subunit">
    <text evidence="1">Part of the 30S ribosomal subunit. Interacts with proteins S7 and S18. Binds to IF-3.</text>
</comment>
<comment type="similarity">
    <text evidence="1">Belongs to the universal ribosomal protein uS11 family.</text>
</comment>
<keyword id="KW-0687">Ribonucleoprotein</keyword>
<keyword id="KW-0689">Ribosomal protein</keyword>
<keyword id="KW-0694">RNA-binding</keyword>
<keyword id="KW-0699">rRNA-binding</keyword>
<feature type="chain" id="PRO_0000294887" description="Small ribosomal subunit protein uS11">
    <location>
        <begin position="1"/>
        <end position="130"/>
    </location>
</feature>
<evidence type="ECO:0000255" key="1">
    <source>
        <dbReference type="HAMAP-Rule" id="MF_01310"/>
    </source>
</evidence>
<evidence type="ECO:0000305" key="2"/>
<reference key="1">
    <citation type="journal article" date="2005" name="Jpn. Agric. Res. Q.">
        <title>Genome sequence of Xanthomonas oryzae pv. oryzae suggests contribution of large numbers of effector genes and insertion sequences to its race diversity.</title>
        <authorList>
            <person name="Ochiai H."/>
            <person name="Inoue Y."/>
            <person name="Takeya M."/>
            <person name="Sasaki A."/>
            <person name="Kaku H."/>
        </authorList>
    </citation>
    <scope>NUCLEOTIDE SEQUENCE [LARGE SCALE GENOMIC DNA]</scope>
    <source>
        <strain>MAFF 311018</strain>
    </source>
</reference>
<accession>Q2P007</accession>
<organism>
    <name type="scientific">Xanthomonas oryzae pv. oryzae (strain MAFF 311018)</name>
    <dbReference type="NCBI Taxonomy" id="342109"/>
    <lineage>
        <taxon>Bacteria</taxon>
        <taxon>Pseudomonadati</taxon>
        <taxon>Pseudomonadota</taxon>
        <taxon>Gammaproteobacteria</taxon>
        <taxon>Lysobacterales</taxon>
        <taxon>Lysobacteraceae</taxon>
        <taxon>Xanthomonas</taxon>
    </lineage>
</organism>
<protein>
    <recommendedName>
        <fullName evidence="1">Small ribosomal subunit protein uS11</fullName>
    </recommendedName>
    <alternativeName>
        <fullName evidence="2">30S ribosomal protein S11</fullName>
    </alternativeName>
</protein>
<gene>
    <name evidence="1" type="primary">rpsK</name>
    <name type="ordered locus">XOO3365</name>
</gene>
<proteinExistence type="inferred from homology"/>
<name>RS11_XANOM</name>
<sequence>MAKPVEKKTKKKIKRVITDGVAHVHASFNNTIVTITDRQGNALSWATSGGAGFRGSRKSTPFAAQVAAEKAGRAALDYGVKSLEVRIKGPGPGRESAVRSLNNVGYKITNIIDVTPIPHNGCRPPKKRRV</sequence>
<dbReference type="EMBL" id="AP008229">
    <property type="protein sequence ID" value="BAE70120.1"/>
    <property type="molecule type" value="Genomic_DNA"/>
</dbReference>
<dbReference type="RefSeq" id="WP_011260019.1">
    <property type="nucleotide sequence ID" value="NC_007705.1"/>
</dbReference>
<dbReference type="SMR" id="Q2P007"/>
<dbReference type="GeneID" id="77338691"/>
<dbReference type="KEGG" id="xom:XOO3365"/>
<dbReference type="HOGENOM" id="CLU_072439_5_0_6"/>
<dbReference type="GO" id="GO:1990904">
    <property type="term" value="C:ribonucleoprotein complex"/>
    <property type="evidence" value="ECO:0007669"/>
    <property type="project" value="UniProtKB-KW"/>
</dbReference>
<dbReference type="GO" id="GO:0005840">
    <property type="term" value="C:ribosome"/>
    <property type="evidence" value="ECO:0007669"/>
    <property type="project" value="UniProtKB-KW"/>
</dbReference>
<dbReference type="GO" id="GO:0019843">
    <property type="term" value="F:rRNA binding"/>
    <property type="evidence" value="ECO:0007669"/>
    <property type="project" value="UniProtKB-UniRule"/>
</dbReference>
<dbReference type="GO" id="GO:0003735">
    <property type="term" value="F:structural constituent of ribosome"/>
    <property type="evidence" value="ECO:0007669"/>
    <property type="project" value="InterPro"/>
</dbReference>
<dbReference type="GO" id="GO:0006412">
    <property type="term" value="P:translation"/>
    <property type="evidence" value="ECO:0007669"/>
    <property type="project" value="UniProtKB-UniRule"/>
</dbReference>
<dbReference type="FunFam" id="3.30.420.80:FF:000001">
    <property type="entry name" value="30S ribosomal protein S11"/>
    <property type="match status" value="1"/>
</dbReference>
<dbReference type="Gene3D" id="3.30.420.80">
    <property type="entry name" value="Ribosomal protein S11"/>
    <property type="match status" value="1"/>
</dbReference>
<dbReference type="HAMAP" id="MF_01310">
    <property type="entry name" value="Ribosomal_uS11"/>
    <property type="match status" value="1"/>
</dbReference>
<dbReference type="InterPro" id="IPR001971">
    <property type="entry name" value="Ribosomal_uS11"/>
</dbReference>
<dbReference type="InterPro" id="IPR019981">
    <property type="entry name" value="Ribosomal_uS11_bac-type"/>
</dbReference>
<dbReference type="InterPro" id="IPR018102">
    <property type="entry name" value="Ribosomal_uS11_CS"/>
</dbReference>
<dbReference type="InterPro" id="IPR036967">
    <property type="entry name" value="Ribosomal_uS11_sf"/>
</dbReference>
<dbReference type="NCBIfam" id="NF003698">
    <property type="entry name" value="PRK05309.1"/>
    <property type="match status" value="1"/>
</dbReference>
<dbReference type="NCBIfam" id="TIGR03632">
    <property type="entry name" value="uS11_bact"/>
    <property type="match status" value="1"/>
</dbReference>
<dbReference type="PANTHER" id="PTHR11759">
    <property type="entry name" value="40S RIBOSOMAL PROTEIN S14/30S RIBOSOMAL PROTEIN S11"/>
    <property type="match status" value="1"/>
</dbReference>
<dbReference type="Pfam" id="PF00411">
    <property type="entry name" value="Ribosomal_S11"/>
    <property type="match status" value="1"/>
</dbReference>
<dbReference type="PIRSF" id="PIRSF002131">
    <property type="entry name" value="Ribosomal_S11"/>
    <property type="match status" value="1"/>
</dbReference>
<dbReference type="SUPFAM" id="SSF53137">
    <property type="entry name" value="Translational machinery components"/>
    <property type="match status" value="1"/>
</dbReference>
<dbReference type="PROSITE" id="PS00054">
    <property type="entry name" value="RIBOSOMAL_S11"/>
    <property type="match status" value="1"/>
</dbReference>